<gene>
    <name evidence="1" type="primary">sspO</name>
    <name type="ordered locus">BAA_3706</name>
</gene>
<keyword id="KW-0749">Sporulation</keyword>
<name>SSPO_BACAA</name>
<feature type="chain" id="PRO_1000147649" description="Small, acid-soluble spore protein O">
    <location>
        <begin position="1"/>
        <end position="49"/>
    </location>
</feature>
<feature type="region of interest" description="Disordered" evidence="2">
    <location>
        <begin position="1"/>
        <end position="49"/>
    </location>
</feature>
<feature type="compositionally biased region" description="Polar residues" evidence="2">
    <location>
        <begin position="8"/>
        <end position="20"/>
    </location>
</feature>
<dbReference type="EMBL" id="CP001598">
    <property type="protein sequence ID" value="ACQ49504.1"/>
    <property type="molecule type" value="Genomic_DNA"/>
</dbReference>
<dbReference type="RefSeq" id="WP_000518052.1">
    <property type="nucleotide sequence ID" value="NC_012659.1"/>
</dbReference>
<dbReference type="GeneID" id="93007567"/>
<dbReference type="KEGG" id="bai:BAA_3706"/>
<dbReference type="HOGENOM" id="CLU_206342_0_0_9"/>
<dbReference type="GO" id="GO:0042601">
    <property type="term" value="C:endospore-forming forespore"/>
    <property type="evidence" value="ECO:0007669"/>
    <property type="project" value="InterPro"/>
</dbReference>
<dbReference type="GO" id="GO:0030436">
    <property type="term" value="P:asexual sporulation"/>
    <property type="evidence" value="ECO:0007669"/>
    <property type="project" value="UniProtKB-UniRule"/>
</dbReference>
<dbReference type="GO" id="GO:0030435">
    <property type="term" value="P:sporulation resulting in formation of a cellular spore"/>
    <property type="evidence" value="ECO:0007669"/>
    <property type="project" value="UniProtKB-KW"/>
</dbReference>
<dbReference type="HAMAP" id="MF_00665">
    <property type="entry name" value="SspO"/>
    <property type="match status" value="1"/>
</dbReference>
<dbReference type="InterPro" id="IPR012613">
    <property type="entry name" value="SASP_SspO"/>
</dbReference>
<dbReference type="NCBIfam" id="TIGR02864">
    <property type="entry name" value="spore_sspO"/>
    <property type="match status" value="1"/>
</dbReference>
<dbReference type="Pfam" id="PF08175">
    <property type="entry name" value="SspO"/>
    <property type="match status" value="1"/>
</dbReference>
<evidence type="ECO:0000255" key="1">
    <source>
        <dbReference type="HAMAP-Rule" id="MF_00665"/>
    </source>
</evidence>
<evidence type="ECO:0000256" key="2">
    <source>
        <dbReference type="SAM" id="MobiDB-lite"/>
    </source>
</evidence>
<comment type="subcellular location">
    <subcellularLocation>
        <location evidence="1">Spore core</location>
    </subcellularLocation>
</comment>
<comment type="induction">
    <text evidence="1">Expressed only in the forespore compartment of sporulating cells.</text>
</comment>
<comment type="similarity">
    <text evidence="1">Belongs to the SspO family.</text>
</comment>
<protein>
    <recommendedName>
        <fullName evidence="1">Small, acid-soluble spore protein O</fullName>
        <shortName evidence="1">SASP O</shortName>
    </recommendedName>
</protein>
<organism>
    <name type="scientific">Bacillus anthracis (strain A0248)</name>
    <dbReference type="NCBI Taxonomy" id="592021"/>
    <lineage>
        <taxon>Bacteria</taxon>
        <taxon>Bacillati</taxon>
        <taxon>Bacillota</taxon>
        <taxon>Bacilli</taxon>
        <taxon>Bacillales</taxon>
        <taxon>Bacillaceae</taxon>
        <taxon>Bacillus</taxon>
        <taxon>Bacillus cereus group</taxon>
    </lineage>
</organism>
<proteinExistence type="inferred from homology"/>
<reference key="1">
    <citation type="submission" date="2009-04" db="EMBL/GenBank/DDBJ databases">
        <title>Genome sequence of Bacillus anthracis A0248.</title>
        <authorList>
            <person name="Dodson R.J."/>
            <person name="Munk A.C."/>
            <person name="Bruce D."/>
            <person name="Detter C."/>
            <person name="Tapia R."/>
            <person name="Sutton G."/>
            <person name="Sims D."/>
            <person name="Brettin T."/>
        </authorList>
    </citation>
    <scope>NUCLEOTIDE SEQUENCE [LARGE SCALE GENOMIC DNA]</scope>
    <source>
        <strain>A0248</strain>
    </source>
</reference>
<sequence length="49" mass="5390">MGKRKANHTISGMNAASAQGQGAGYNEEFANENLTPAERQNNKKRKKNQ</sequence>
<accession>C3P458</accession>